<protein>
    <recommendedName>
        <fullName evidence="1">Probable sugar efflux transporter</fullName>
    </recommendedName>
</protein>
<comment type="function">
    <text evidence="1">Involved in the efflux of sugars. The physiological role may be the reduction of the intracellular concentration of toxic sugars or sugar metabolites.</text>
</comment>
<comment type="subcellular location">
    <subcellularLocation>
        <location evidence="1">Cell inner membrane</location>
        <topology evidence="1">Multi-pass membrane protein</topology>
    </subcellularLocation>
</comment>
<comment type="similarity">
    <text evidence="1">Belongs to the major facilitator superfamily. SotB (TC 2.A.1.2) family.</text>
</comment>
<gene>
    <name evidence="1" type="primary">sotB</name>
    <name type="ordered locus">EcSMS35_1642</name>
</gene>
<dbReference type="EMBL" id="CP000970">
    <property type="protein sequence ID" value="ACB15954.1"/>
    <property type="molecule type" value="Genomic_DNA"/>
</dbReference>
<dbReference type="SMR" id="B1LF85"/>
<dbReference type="KEGG" id="ecm:EcSMS35_1642"/>
<dbReference type="HOGENOM" id="CLU_001265_61_1_6"/>
<dbReference type="Proteomes" id="UP000007011">
    <property type="component" value="Chromosome"/>
</dbReference>
<dbReference type="GO" id="GO:0005886">
    <property type="term" value="C:plasma membrane"/>
    <property type="evidence" value="ECO:0007669"/>
    <property type="project" value="UniProtKB-SubCell"/>
</dbReference>
<dbReference type="GO" id="GO:0015144">
    <property type="term" value="F:carbohydrate transmembrane transporter activity"/>
    <property type="evidence" value="ECO:0007669"/>
    <property type="project" value="UniProtKB-UniRule"/>
</dbReference>
<dbReference type="CDD" id="cd17324">
    <property type="entry name" value="MFS_NepI_like"/>
    <property type="match status" value="1"/>
</dbReference>
<dbReference type="FunFam" id="1.20.1250.20:FF:000079">
    <property type="entry name" value="Probable sugar efflux transporter"/>
    <property type="match status" value="1"/>
</dbReference>
<dbReference type="Gene3D" id="1.20.1250.20">
    <property type="entry name" value="MFS general substrate transporter like domains"/>
    <property type="match status" value="1"/>
</dbReference>
<dbReference type="HAMAP" id="MF_00517">
    <property type="entry name" value="MFS_SotB"/>
    <property type="match status" value="1"/>
</dbReference>
<dbReference type="InterPro" id="IPR011701">
    <property type="entry name" value="MFS"/>
</dbReference>
<dbReference type="InterPro" id="IPR020846">
    <property type="entry name" value="MFS_dom"/>
</dbReference>
<dbReference type="InterPro" id="IPR050189">
    <property type="entry name" value="MFS_Efflux_Transporters"/>
</dbReference>
<dbReference type="InterPro" id="IPR036259">
    <property type="entry name" value="MFS_trans_sf"/>
</dbReference>
<dbReference type="InterPro" id="IPR023495">
    <property type="entry name" value="Sugar_effux_transptr_put"/>
</dbReference>
<dbReference type="NCBIfam" id="NF002921">
    <property type="entry name" value="PRK03545.1"/>
    <property type="match status" value="1"/>
</dbReference>
<dbReference type="PANTHER" id="PTHR43124">
    <property type="entry name" value="PURINE EFFLUX PUMP PBUE"/>
    <property type="match status" value="1"/>
</dbReference>
<dbReference type="PANTHER" id="PTHR43124:SF4">
    <property type="entry name" value="SUGAR EFFLUX TRANSPORTER"/>
    <property type="match status" value="1"/>
</dbReference>
<dbReference type="Pfam" id="PF07690">
    <property type="entry name" value="MFS_1"/>
    <property type="match status" value="1"/>
</dbReference>
<dbReference type="SUPFAM" id="SSF103473">
    <property type="entry name" value="MFS general substrate transporter"/>
    <property type="match status" value="1"/>
</dbReference>
<dbReference type="PROSITE" id="PS50850">
    <property type="entry name" value="MFS"/>
    <property type="match status" value="1"/>
</dbReference>
<sequence>MTTNTVSRKVAWLRVVTLAVAAFIFNTTEFVPVGLLSDIAQSFHMQTAQVGIMLTIYAWVVALMSLPFMLMTSQVERRKLLICLFVVFIASHVLSFLSWSFTVLVISRIGVAFAHAIFWSITASLAIRMAPAGKRAQALSLIATGTALAMVLGLPLGRIVGQYFGWRMTFFAIGIGALITLLCLIKLLPLLPSEHSGSLKSLPLLFRRPALMSIYLLTVVVVTAHYTAYSYIEPFVQNIAGFSANFATALLLLLGGAGIIGSVIFGKLGNQYASTLVSTAIALLLVCLALLLPAANSEIHLGVLSIFWGIAMMIIGLGMQVKVLALAPDATDVAMALFSGIFNIGIGAGALVGNQVSLHWSMSMIGYVGAVPAFAALIWSIIIFRRWPVTLEEQTQ</sequence>
<reference key="1">
    <citation type="journal article" date="2008" name="J. Bacteriol.">
        <title>Insights into the environmental resistance gene pool from the genome sequence of the multidrug-resistant environmental isolate Escherichia coli SMS-3-5.</title>
        <authorList>
            <person name="Fricke W.F."/>
            <person name="Wright M.S."/>
            <person name="Lindell A.H."/>
            <person name="Harkins D.M."/>
            <person name="Baker-Austin C."/>
            <person name="Ravel J."/>
            <person name="Stepanauskas R."/>
        </authorList>
    </citation>
    <scope>NUCLEOTIDE SEQUENCE [LARGE SCALE GENOMIC DNA]</scope>
    <source>
        <strain>SMS-3-5 / SECEC</strain>
    </source>
</reference>
<evidence type="ECO:0000255" key="1">
    <source>
        <dbReference type="HAMAP-Rule" id="MF_00517"/>
    </source>
</evidence>
<organism>
    <name type="scientific">Escherichia coli (strain SMS-3-5 / SECEC)</name>
    <dbReference type="NCBI Taxonomy" id="439855"/>
    <lineage>
        <taxon>Bacteria</taxon>
        <taxon>Pseudomonadati</taxon>
        <taxon>Pseudomonadota</taxon>
        <taxon>Gammaproteobacteria</taxon>
        <taxon>Enterobacterales</taxon>
        <taxon>Enterobacteriaceae</taxon>
        <taxon>Escherichia</taxon>
    </lineage>
</organism>
<proteinExistence type="inferred from homology"/>
<feature type="chain" id="PRO_1000127461" description="Probable sugar efflux transporter">
    <location>
        <begin position="1"/>
        <end position="396"/>
    </location>
</feature>
<feature type="transmembrane region" description="Helical" evidence="1">
    <location>
        <begin position="15"/>
        <end position="35"/>
    </location>
</feature>
<feature type="transmembrane region" description="Helical" evidence="1">
    <location>
        <begin position="50"/>
        <end position="70"/>
    </location>
</feature>
<feature type="transmembrane region" description="Helical" evidence="1">
    <location>
        <begin position="81"/>
        <end position="101"/>
    </location>
</feature>
<feature type="transmembrane region" description="Helical" evidence="1">
    <location>
        <begin position="103"/>
        <end position="123"/>
    </location>
</feature>
<feature type="transmembrane region" description="Helical" evidence="1">
    <location>
        <begin position="136"/>
        <end position="156"/>
    </location>
</feature>
<feature type="transmembrane region" description="Helical" evidence="1">
    <location>
        <begin position="170"/>
        <end position="190"/>
    </location>
</feature>
<feature type="transmembrane region" description="Helical" evidence="1">
    <location>
        <begin position="209"/>
        <end position="229"/>
    </location>
</feature>
<feature type="transmembrane region" description="Helical" evidence="1">
    <location>
        <begin position="246"/>
        <end position="266"/>
    </location>
</feature>
<feature type="transmembrane region" description="Helical" evidence="1">
    <location>
        <begin position="275"/>
        <end position="295"/>
    </location>
</feature>
<feature type="transmembrane region" description="Helical" evidence="1">
    <location>
        <begin position="299"/>
        <end position="319"/>
    </location>
</feature>
<feature type="transmembrane region" description="Helical" evidence="1">
    <location>
        <begin position="333"/>
        <end position="353"/>
    </location>
</feature>
<feature type="transmembrane region" description="Helical" evidence="1">
    <location>
        <begin position="364"/>
        <end position="384"/>
    </location>
</feature>
<name>SOTB_ECOSM</name>
<accession>B1LF85</accession>
<keyword id="KW-0997">Cell inner membrane</keyword>
<keyword id="KW-1003">Cell membrane</keyword>
<keyword id="KW-0472">Membrane</keyword>
<keyword id="KW-0762">Sugar transport</keyword>
<keyword id="KW-0812">Transmembrane</keyword>
<keyword id="KW-1133">Transmembrane helix</keyword>
<keyword id="KW-0813">Transport</keyword>